<reference key="1">
    <citation type="journal article" date="2009" name="J. Bacteriol.">
        <title>Genome sequence of Azotobacter vinelandii, an obligate aerobe specialized to support diverse anaerobic metabolic processes.</title>
        <authorList>
            <person name="Setubal J.C."/>
            <person name="Dos Santos P."/>
            <person name="Goldman B.S."/>
            <person name="Ertesvaag H."/>
            <person name="Espin G."/>
            <person name="Rubio L.M."/>
            <person name="Valla S."/>
            <person name="Almeida N.F."/>
            <person name="Balasubramanian D."/>
            <person name="Cromes L."/>
            <person name="Curatti L."/>
            <person name="Du Z."/>
            <person name="Godsy E."/>
            <person name="Goodner B."/>
            <person name="Hellner-Burris K."/>
            <person name="Hernandez J.A."/>
            <person name="Houmiel K."/>
            <person name="Imperial J."/>
            <person name="Kennedy C."/>
            <person name="Larson T.J."/>
            <person name="Latreille P."/>
            <person name="Ligon L.S."/>
            <person name="Lu J."/>
            <person name="Maerk M."/>
            <person name="Miller N.M."/>
            <person name="Norton S."/>
            <person name="O'Carroll I.P."/>
            <person name="Paulsen I."/>
            <person name="Raulfs E.C."/>
            <person name="Roemer R."/>
            <person name="Rosser J."/>
            <person name="Segura D."/>
            <person name="Slater S."/>
            <person name="Stricklin S.L."/>
            <person name="Studholme D.J."/>
            <person name="Sun J."/>
            <person name="Viana C.J."/>
            <person name="Wallin E."/>
            <person name="Wang B."/>
            <person name="Wheeler C."/>
            <person name="Zhu H."/>
            <person name="Dean D.R."/>
            <person name="Dixon R."/>
            <person name="Wood D."/>
        </authorList>
    </citation>
    <scope>NUCLEOTIDE SEQUENCE [LARGE SCALE GENOMIC DNA]</scope>
    <source>
        <strain>DJ / ATCC BAA-1303</strain>
    </source>
</reference>
<feature type="chain" id="PRO_1000215894" description="Methylthioribose-1-phosphate isomerase">
    <location>
        <begin position="1"/>
        <end position="358"/>
    </location>
</feature>
<feature type="active site" description="Proton donor" evidence="1">
    <location>
        <position position="246"/>
    </location>
</feature>
<feature type="binding site" evidence="1">
    <location>
        <begin position="54"/>
        <end position="56"/>
    </location>
    <ligand>
        <name>substrate</name>
    </ligand>
</feature>
<feature type="binding site" evidence="1">
    <location>
        <position position="96"/>
    </location>
    <ligand>
        <name>substrate</name>
    </ligand>
</feature>
<feature type="binding site" evidence="1">
    <location>
        <position position="205"/>
    </location>
    <ligand>
        <name>substrate</name>
    </ligand>
</feature>
<feature type="binding site" evidence="1">
    <location>
        <begin position="256"/>
        <end position="257"/>
    </location>
    <ligand>
        <name>substrate</name>
    </ligand>
</feature>
<feature type="site" description="Transition state stabilizer" evidence="1">
    <location>
        <position position="166"/>
    </location>
</feature>
<sequence>MRERLLAAEKIKAIEWRDGTLHLLDQRLLPQEERWLSYDSASGVAGAIRDMVVRGAPAIGISAAYGVLLGARRRLAAGGDWRAALEEDFRVLAESRPTAVNLFWALDRMRERLARLKDGEDALVALEAEAVGIHESDREANLTMAQLGLELIRKHSGSPQALLTHCNTGALATGGFGTALGVIRAAWLEGLVDRVYADETRPWLQGARLTAWELAEEGIPVSLNADGAAAHLMKTKGITWVIVGADRITAEGDVANKIGTYQLAVVAMHHGVRFMVVAPSSTIDMSLHSGEDIPIEERDGRELLEIGGKRVAASVEAVNPVFDVTPADLIDAIVTERGVVERPNAAKMAELMSRKRLH</sequence>
<gene>
    <name evidence="1" type="primary">mtnA</name>
    <name type="ordered locus">Avin_15800</name>
</gene>
<keyword id="KW-0028">Amino-acid biosynthesis</keyword>
<keyword id="KW-0413">Isomerase</keyword>
<keyword id="KW-0486">Methionine biosynthesis</keyword>
<dbReference type="EC" id="5.3.1.23" evidence="1"/>
<dbReference type="EMBL" id="CP001157">
    <property type="protein sequence ID" value="ACO77795.1"/>
    <property type="molecule type" value="Genomic_DNA"/>
</dbReference>
<dbReference type="RefSeq" id="WP_012700210.1">
    <property type="nucleotide sequence ID" value="NC_012560.1"/>
</dbReference>
<dbReference type="SMR" id="C1DRQ7"/>
<dbReference type="STRING" id="322710.Avin_15800"/>
<dbReference type="EnsemblBacteria" id="ACO77795">
    <property type="protein sequence ID" value="ACO77795"/>
    <property type="gene ID" value="Avin_15800"/>
</dbReference>
<dbReference type="GeneID" id="88184871"/>
<dbReference type="KEGG" id="avn:Avin_15800"/>
<dbReference type="eggNOG" id="COG0182">
    <property type="taxonomic scope" value="Bacteria"/>
</dbReference>
<dbReference type="HOGENOM" id="CLU_016218_1_2_6"/>
<dbReference type="OrthoDB" id="9803436at2"/>
<dbReference type="UniPathway" id="UPA00904">
    <property type="reaction ID" value="UER00874"/>
</dbReference>
<dbReference type="Proteomes" id="UP000002424">
    <property type="component" value="Chromosome"/>
</dbReference>
<dbReference type="GO" id="GO:0046523">
    <property type="term" value="F:S-methyl-5-thioribose-1-phosphate isomerase activity"/>
    <property type="evidence" value="ECO:0007669"/>
    <property type="project" value="UniProtKB-UniRule"/>
</dbReference>
<dbReference type="GO" id="GO:0019509">
    <property type="term" value="P:L-methionine salvage from methylthioadenosine"/>
    <property type="evidence" value="ECO:0007669"/>
    <property type="project" value="UniProtKB-UniRule"/>
</dbReference>
<dbReference type="FunFam" id="1.20.120.420:FF:000008">
    <property type="entry name" value="Methylthioribose-1-phosphate isomerase"/>
    <property type="match status" value="1"/>
</dbReference>
<dbReference type="FunFam" id="3.40.50.10470:FF:000006">
    <property type="entry name" value="Methylthioribose-1-phosphate isomerase"/>
    <property type="match status" value="1"/>
</dbReference>
<dbReference type="Gene3D" id="1.20.120.420">
    <property type="entry name" value="translation initiation factor eif-2b, domain 1"/>
    <property type="match status" value="1"/>
</dbReference>
<dbReference type="Gene3D" id="3.40.50.10470">
    <property type="entry name" value="Translation initiation factor eif-2b, domain 2"/>
    <property type="match status" value="1"/>
</dbReference>
<dbReference type="HAMAP" id="MF_01678">
    <property type="entry name" value="Salvage_MtnA"/>
    <property type="match status" value="1"/>
</dbReference>
<dbReference type="InterPro" id="IPR000649">
    <property type="entry name" value="IF-2B-related"/>
</dbReference>
<dbReference type="InterPro" id="IPR005251">
    <property type="entry name" value="IF-M1Pi"/>
</dbReference>
<dbReference type="InterPro" id="IPR042529">
    <property type="entry name" value="IF_2B-like_C"/>
</dbReference>
<dbReference type="InterPro" id="IPR011559">
    <property type="entry name" value="Initiation_fac_2B_a/b/d"/>
</dbReference>
<dbReference type="InterPro" id="IPR027363">
    <property type="entry name" value="M1Pi_N"/>
</dbReference>
<dbReference type="InterPro" id="IPR037171">
    <property type="entry name" value="NagB/RpiA_transferase-like"/>
</dbReference>
<dbReference type="NCBIfam" id="TIGR00524">
    <property type="entry name" value="eIF-2B_rel"/>
    <property type="match status" value="1"/>
</dbReference>
<dbReference type="NCBIfam" id="NF004326">
    <property type="entry name" value="PRK05720.1"/>
    <property type="match status" value="1"/>
</dbReference>
<dbReference type="NCBIfam" id="TIGR00512">
    <property type="entry name" value="salvage_mtnA"/>
    <property type="match status" value="1"/>
</dbReference>
<dbReference type="PANTHER" id="PTHR43475">
    <property type="entry name" value="METHYLTHIORIBOSE-1-PHOSPHATE ISOMERASE"/>
    <property type="match status" value="1"/>
</dbReference>
<dbReference type="PANTHER" id="PTHR43475:SF1">
    <property type="entry name" value="METHYLTHIORIBOSE-1-PHOSPHATE ISOMERASE"/>
    <property type="match status" value="1"/>
</dbReference>
<dbReference type="Pfam" id="PF01008">
    <property type="entry name" value="IF-2B"/>
    <property type="match status" value="1"/>
</dbReference>
<dbReference type="SUPFAM" id="SSF100950">
    <property type="entry name" value="NagB/RpiA/CoA transferase-like"/>
    <property type="match status" value="1"/>
</dbReference>
<organism>
    <name type="scientific">Azotobacter vinelandii (strain DJ / ATCC BAA-1303)</name>
    <dbReference type="NCBI Taxonomy" id="322710"/>
    <lineage>
        <taxon>Bacteria</taxon>
        <taxon>Pseudomonadati</taxon>
        <taxon>Pseudomonadota</taxon>
        <taxon>Gammaproteobacteria</taxon>
        <taxon>Pseudomonadales</taxon>
        <taxon>Pseudomonadaceae</taxon>
        <taxon>Azotobacter</taxon>
    </lineage>
</organism>
<name>MTNA_AZOVD</name>
<proteinExistence type="inferred from homology"/>
<comment type="function">
    <text evidence="1">Catalyzes the interconversion of methylthioribose-1-phosphate (MTR-1-P) into methylthioribulose-1-phosphate (MTRu-1-P).</text>
</comment>
<comment type="catalytic activity">
    <reaction evidence="1">
        <text>5-(methylsulfanyl)-alpha-D-ribose 1-phosphate = 5-(methylsulfanyl)-D-ribulose 1-phosphate</text>
        <dbReference type="Rhea" id="RHEA:19989"/>
        <dbReference type="ChEBI" id="CHEBI:58533"/>
        <dbReference type="ChEBI" id="CHEBI:58548"/>
        <dbReference type="EC" id="5.3.1.23"/>
    </reaction>
</comment>
<comment type="pathway">
    <text evidence="1">Amino-acid biosynthesis; L-methionine biosynthesis via salvage pathway; L-methionine from S-methyl-5-thio-alpha-D-ribose 1-phosphate: step 1/6.</text>
</comment>
<comment type="similarity">
    <text evidence="2">Belongs to the eIF-2B alpha/beta/delta subunits family. MtnA subfamily.</text>
</comment>
<evidence type="ECO:0000255" key="1">
    <source>
        <dbReference type="HAMAP-Rule" id="MF_01678"/>
    </source>
</evidence>
<evidence type="ECO:0000305" key="2"/>
<accession>C1DRQ7</accession>
<protein>
    <recommendedName>
        <fullName evidence="1">Methylthioribose-1-phosphate isomerase</fullName>
        <shortName evidence="1">M1Pi</shortName>
        <shortName evidence="1">MTR-1-P isomerase</shortName>
        <ecNumber evidence="1">5.3.1.23</ecNumber>
    </recommendedName>
    <alternativeName>
        <fullName evidence="1">S-methyl-5-thioribose-1-phosphate isomerase</fullName>
    </alternativeName>
</protein>